<reference key="1">
    <citation type="submission" date="2006-12" db="EMBL/GenBank/DDBJ databases">
        <title>Complete sequence of chromosome 1 of Acidovorax sp. JS42.</title>
        <authorList>
            <person name="Copeland A."/>
            <person name="Lucas S."/>
            <person name="Lapidus A."/>
            <person name="Barry K."/>
            <person name="Detter J.C."/>
            <person name="Glavina del Rio T."/>
            <person name="Dalin E."/>
            <person name="Tice H."/>
            <person name="Pitluck S."/>
            <person name="Chertkov O."/>
            <person name="Brettin T."/>
            <person name="Bruce D."/>
            <person name="Han C."/>
            <person name="Tapia R."/>
            <person name="Gilna P."/>
            <person name="Schmutz J."/>
            <person name="Larimer F."/>
            <person name="Land M."/>
            <person name="Hauser L."/>
            <person name="Kyrpides N."/>
            <person name="Kim E."/>
            <person name="Stahl D."/>
            <person name="Richardson P."/>
        </authorList>
    </citation>
    <scope>NUCLEOTIDE SEQUENCE [LARGE SCALE GENOMIC DNA]</scope>
    <source>
        <strain>JS42</strain>
    </source>
</reference>
<evidence type="ECO:0000255" key="1">
    <source>
        <dbReference type="HAMAP-Rule" id="MF_01341"/>
    </source>
</evidence>
<evidence type="ECO:0000256" key="2">
    <source>
        <dbReference type="SAM" id="MobiDB-lite"/>
    </source>
</evidence>
<evidence type="ECO:0000305" key="3"/>
<sequence length="143" mass="14633">MELNSIKPADGAKHAARRVGRGIGSGLGKTAGRGHKGQKSRSGGYHKVGFEGGQMPLQRRLPKRGFKSHLLKFNAEISLTALENLGLAEVDVLALKNAGLVGELAKVVKVIKSGEISKAVKLSGITATAGAKAAIEAAGGSLA</sequence>
<gene>
    <name evidence="1" type="primary">rplO</name>
    <name type="ordered locus">Ajs_0400</name>
</gene>
<dbReference type="EMBL" id="CP000539">
    <property type="protein sequence ID" value="ABM40652.1"/>
    <property type="molecule type" value="Genomic_DNA"/>
</dbReference>
<dbReference type="SMR" id="A1W327"/>
<dbReference type="STRING" id="232721.Ajs_0400"/>
<dbReference type="KEGG" id="ajs:Ajs_0400"/>
<dbReference type="eggNOG" id="COG0200">
    <property type="taxonomic scope" value="Bacteria"/>
</dbReference>
<dbReference type="HOGENOM" id="CLU_055188_4_2_4"/>
<dbReference type="Proteomes" id="UP000000645">
    <property type="component" value="Chromosome"/>
</dbReference>
<dbReference type="GO" id="GO:0022625">
    <property type="term" value="C:cytosolic large ribosomal subunit"/>
    <property type="evidence" value="ECO:0007669"/>
    <property type="project" value="TreeGrafter"/>
</dbReference>
<dbReference type="GO" id="GO:0019843">
    <property type="term" value="F:rRNA binding"/>
    <property type="evidence" value="ECO:0007669"/>
    <property type="project" value="UniProtKB-UniRule"/>
</dbReference>
<dbReference type="GO" id="GO:0003735">
    <property type="term" value="F:structural constituent of ribosome"/>
    <property type="evidence" value="ECO:0007669"/>
    <property type="project" value="InterPro"/>
</dbReference>
<dbReference type="GO" id="GO:0006412">
    <property type="term" value="P:translation"/>
    <property type="evidence" value="ECO:0007669"/>
    <property type="project" value="UniProtKB-UniRule"/>
</dbReference>
<dbReference type="Gene3D" id="3.100.10.10">
    <property type="match status" value="1"/>
</dbReference>
<dbReference type="HAMAP" id="MF_01341">
    <property type="entry name" value="Ribosomal_uL15"/>
    <property type="match status" value="1"/>
</dbReference>
<dbReference type="InterPro" id="IPR030878">
    <property type="entry name" value="Ribosomal_uL15"/>
</dbReference>
<dbReference type="InterPro" id="IPR021131">
    <property type="entry name" value="Ribosomal_uL15/eL18"/>
</dbReference>
<dbReference type="InterPro" id="IPR036227">
    <property type="entry name" value="Ribosomal_uL15/eL18_sf"/>
</dbReference>
<dbReference type="InterPro" id="IPR005749">
    <property type="entry name" value="Ribosomal_uL15_bac-type"/>
</dbReference>
<dbReference type="NCBIfam" id="TIGR01071">
    <property type="entry name" value="rplO_bact"/>
    <property type="match status" value="1"/>
</dbReference>
<dbReference type="PANTHER" id="PTHR12934">
    <property type="entry name" value="50S RIBOSOMAL PROTEIN L15"/>
    <property type="match status" value="1"/>
</dbReference>
<dbReference type="PANTHER" id="PTHR12934:SF11">
    <property type="entry name" value="LARGE RIBOSOMAL SUBUNIT PROTEIN UL15M"/>
    <property type="match status" value="1"/>
</dbReference>
<dbReference type="Pfam" id="PF00828">
    <property type="entry name" value="Ribosomal_L27A"/>
    <property type="match status" value="1"/>
</dbReference>
<dbReference type="SUPFAM" id="SSF52080">
    <property type="entry name" value="Ribosomal proteins L15p and L18e"/>
    <property type="match status" value="1"/>
</dbReference>
<accession>A1W327</accession>
<name>RL15_ACISJ</name>
<proteinExistence type="inferred from homology"/>
<feature type="chain" id="PRO_1000054418" description="Large ribosomal subunit protein uL15">
    <location>
        <begin position="1"/>
        <end position="143"/>
    </location>
</feature>
<feature type="region of interest" description="Disordered" evidence="2">
    <location>
        <begin position="1"/>
        <end position="54"/>
    </location>
</feature>
<feature type="compositionally biased region" description="Gly residues" evidence="2">
    <location>
        <begin position="21"/>
        <end position="31"/>
    </location>
</feature>
<keyword id="KW-0687">Ribonucleoprotein</keyword>
<keyword id="KW-0689">Ribosomal protein</keyword>
<keyword id="KW-0694">RNA-binding</keyword>
<keyword id="KW-0699">rRNA-binding</keyword>
<organism>
    <name type="scientific">Acidovorax sp. (strain JS42)</name>
    <dbReference type="NCBI Taxonomy" id="232721"/>
    <lineage>
        <taxon>Bacteria</taxon>
        <taxon>Pseudomonadati</taxon>
        <taxon>Pseudomonadota</taxon>
        <taxon>Betaproteobacteria</taxon>
        <taxon>Burkholderiales</taxon>
        <taxon>Comamonadaceae</taxon>
        <taxon>Acidovorax</taxon>
    </lineage>
</organism>
<protein>
    <recommendedName>
        <fullName evidence="1">Large ribosomal subunit protein uL15</fullName>
    </recommendedName>
    <alternativeName>
        <fullName evidence="3">50S ribosomal protein L15</fullName>
    </alternativeName>
</protein>
<comment type="function">
    <text evidence="1">Binds to the 23S rRNA.</text>
</comment>
<comment type="subunit">
    <text evidence="1">Part of the 50S ribosomal subunit.</text>
</comment>
<comment type="similarity">
    <text evidence="1">Belongs to the universal ribosomal protein uL15 family.</text>
</comment>